<feature type="signal peptide" evidence="1">
    <location>
        <begin position="1"/>
        <end position="18"/>
    </location>
</feature>
<feature type="chain" id="PRO_5004055464" description="Endo-1,4-beta-xylanase A">
    <location>
        <begin position="19"/>
        <end position="376"/>
    </location>
</feature>
<feature type="domain" description="GH10" evidence="3">
    <location>
        <begin position="55"/>
        <end position="355"/>
    </location>
</feature>
<feature type="active site" description="Proton donor" evidence="3">
    <location>
        <position position="170"/>
    </location>
</feature>
<feature type="active site" description="Nucleophile" evidence="3">
    <location>
        <position position="277"/>
    </location>
</feature>
<feature type="glycosylation site" description="N-linked (GlcNAc...) asparagine" evidence="2">
    <location>
        <position position="100"/>
    </location>
</feature>
<feature type="glycosylation site" description="N-linked (GlcNAc...) asparagine" evidence="2">
    <location>
        <position position="358"/>
    </location>
</feature>
<dbReference type="EC" id="3.2.1.8" evidence="4"/>
<dbReference type="EMBL" id="JX275830">
    <property type="protein sequence ID" value="AGG68962.1"/>
    <property type="molecule type" value="mRNA"/>
</dbReference>
<dbReference type="UniPathway" id="UPA00114"/>
<dbReference type="GO" id="GO:0005576">
    <property type="term" value="C:extracellular region"/>
    <property type="evidence" value="ECO:0007669"/>
    <property type="project" value="UniProtKB-SubCell"/>
</dbReference>
<dbReference type="GO" id="GO:0031176">
    <property type="term" value="F:endo-1,4-beta-xylanase activity"/>
    <property type="evidence" value="ECO:0007669"/>
    <property type="project" value="UniProtKB-EC"/>
</dbReference>
<dbReference type="GO" id="GO:0045493">
    <property type="term" value="P:xylan catabolic process"/>
    <property type="evidence" value="ECO:0007669"/>
    <property type="project" value="UniProtKB-KW"/>
</dbReference>
<dbReference type="Gene3D" id="3.20.20.80">
    <property type="entry name" value="Glycosidases"/>
    <property type="match status" value="1"/>
</dbReference>
<dbReference type="InterPro" id="IPR044846">
    <property type="entry name" value="GH10"/>
</dbReference>
<dbReference type="InterPro" id="IPR001000">
    <property type="entry name" value="GH10_dom"/>
</dbReference>
<dbReference type="InterPro" id="IPR017853">
    <property type="entry name" value="Glycoside_hydrolase_SF"/>
</dbReference>
<dbReference type="PANTHER" id="PTHR31490:SF35">
    <property type="entry name" value="ENDO-1,4-BETA-XYLANASE"/>
    <property type="match status" value="1"/>
</dbReference>
<dbReference type="PANTHER" id="PTHR31490">
    <property type="entry name" value="GLYCOSYL HYDROLASE"/>
    <property type="match status" value="1"/>
</dbReference>
<dbReference type="Pfam" id="PF00331">
    <property type="entry name" value="Glyco_hydro_10"/>
    <property type="match status" value="1"/>
</dbReference>
<dbReference type="PRINTS" id="PR00134">
    <property type="entry name" value="GLHYDRLASE10"/>
</dbReference>
<dbReference type="SMART" id="SM00633">
    <property type="entry name" value="Glyco_10"/>
    <property type="match status" value="1"/>
</dbReference>
<dbReference type="SUPFAM" id="SSF51445">
    <property type="entry name" value="(Trans)glycosidases"/>
    <property type="match status" value="1"/>
</dbReference>
<dbReference type="PROSITE" id="PS51760">
    <property type="entry name" value="GH10_2"/>
    <property type="match status" value="1"/>
</dbReference>
<proteinExistence type="evidence at protein level"/>
<name>XYNA_HUMIN</name>
<reference key="1">
    <citation type="journal article" date="2013" name="Bioresour. Technol.">
        <title>Characterization of three novel thermophilic xylanases from Humicola insolens Y1 with application potentials in the brewing industry.</title>
        <authorList>
            <person name="Du Y."/>
            <person name="Shi P."/>
            <person name="Huang H."/>
            <person name="Zhang X."/>
            <person name="Luo H."/>
            <person name="Wang Y."/>
            <person name="Yao B."/>
        </authorList>
    </citation>
    <scope>NUCLEOTIDE SEQUENCE [MRNA]</scope>
    <scope>FUNCTION</scope>
    <scope>CATALYTIC ACTIVITY</scope>
    <scope>BIOPHYSICOCHEMICAL PROPERTIES</scope>
    <scope>SUBSTRATE SPECIFICITY</scope>
    <scope>ACTIVITY REGULATION</scope>
    <scope>BIOTECHNOLOGY</scope>
    <source>
        <strain>Y1</strain>
    </source>
</reference>
<reference key="2">
    <citation type="journal article" date="2019" name="Int. J. Mol. Sci.">
        <title>A novel CreA-mediated regulation mechanism of cellulase expression in the thermophilic fungus Humicola insolens.</title>
        <authorList>
            <person name="Xu X."/>
            <person name="Fan C."/>
            <person name="Song L."/>
            <person name="Li J."/>
            <person name="Chen Y."/>
            <person name="Zhang Y."/>
            <person name="Liu B."/>
            <person name="Zhang W."/>
        </authorList>
    </citation>
    <scope>INDUCTION</scope>
</reference>
<comment type="function">
    <text evidence="4">Endo-1,4-beta-xylanase involved in the hydrolysis of xylan, a major structural heterogeneous polysaccharide found in plant biomass representing the second most abundant polysaccharide in the biosphere, after cellulose (PubMed:23306124). Is most active on birchwood xylan (defined as 100%), moderate on beechwood xylan (96.8%) and soluble wheat arabinoxylan (84.5%), and weak on insoluble wheat arabinoxylan (19.7%) (PubMed:23306124). Hydrolyzes substrates into a mixture of xylobiose and xylotriose, but no xylose (PubMed:23306124). No activity was detected in the presence of barley beta-glucan, carboxymethyl cellulose-sodium (CMC-Na), and Avicel (PubMed:23306124). Acts as an alkali-tolerant xylanase, exhibiting 68.8% of the activity at pH 9.0, and even 31.8% at pH 10.0 (PubMed:23306124).</text>
</comment>
<comment type="catalytic activity">
    <reaction evidence="4">
        <text>Endohydrolysis of (1-&gt;4)-beta-D-xylosidic linkages in xylans.</text>
        <dbReference type="EC" id="3.2.1.8"/>
    </reaction>
</comment>
<comment type="activity regulation">
    <text evidence="4">Partial inhibition of activity is detected in the presence of Ag(+), Cu2(+) and SDS. Like most fungal xylanases, activity is completely inhibited by Hg(2+) since Hg(2+) could interact with tryptophan residues and oxidize the indole ring (PubMed:23306124). Beta-mercaptoethanol enhances the enzymatic activity by counteracting the oxidation effects of the S-S linkage between cysteine residues (PubMed:23306124).</text>
</comment>
<comment type="biophysicochemical properties">
    <kinetics>
        <KM evidence="4">1.6 mM for birchwood xylan</KM>
        <Vmax evidence="4">974.4 umol/min/mg enzyme towards birchwood xylan</Vmax>
    </kinetics>
    <phDependence>
        <text evidence="4">Optimum pH is 6.0.</text>
    </phDependence>
    <temperatureDependence>
        <text evidence="4">Optimum temperature is 80 degrees Celsius.</text>
    </temperatureDependence>
</comment>
<comment type="pathway">
    <text evidence="4">Glycan degradation; xylan degradation.</text>
</comment>
<comment type="subcellular location">
    <subcellularLocation>
        <location evidence="8">Secreted</location>
    </subcellularLocation>
</comment>
<comment type="induction">
    <text evidence="5">Expression is inhibited by the transcription factor CreA in the presence of glucose.</text>
</comment>
<comment type="biotechnology">
    <text evidence="4">Considering the detergent and textile solutions that are neutral to alkaline and must be tolerant to high temperatures and SDS, the three xylanases XynA, XynB and XynC having such favorable properties might represent potential candidates in the detergent and textile industries (PubMed:23306124). Together with their wide substrate specificities, the XynA, XynB and XynC thermophilic xylanases could also be of considerable commercial interest in various other industries, especially in the brewing industry (PubMed:23306124). Moreover, application of XynA to produce xylobiose from soluble wheat arabinoxylan is economic and attractive (PubMed:23306124).</text>
</comment>
<comment type="similarity">
    <text evidence="7">Belongs to the glycosyl hydrolase 10 (cellulase F) family.</text>
</comment>
<sequence>MHLASSLFLLATLPFGFAAGKGKGKGKDNSDVGLDVLAKKAGLKYFGAATDTPGQRERAGLEDKYPEYDRIMWHSPEFGSTTPTNGQKWLFVEPERGVFNFTEGDVVASKARQHGKLLRCHALVWHSQLAPWVEETEWTPEELRKVIVDHITAVAGHYKGQCYAWDVVNEALNEDGTYRESVFYKVLGEEYIKLAFETAAKVDPKAKLYYNDYNLEWPSAKTEGAKRIVKLLKDAKIPIHGVGLQAHLIAEQHPTLDDHIAAIRGFTQLGVEVALTELDIRLKTPATEENLALQREAYKNVVGACVQVCGCVGVTIWDFYDPFSWVPYFFEGEGAPLLWFEDFSKHPAYYGVVEALTNKTRRSKRSISDRRAKLLA</sequence>
<evidence type="ECO:0000255" key="1"/>
<evidence type="ECO:0000255" key="2">
    <source>
        <dbReference type="PROSITE-ProRule" id="PRU00498"/>
    </source>
</evidence>
<evidence type="ECO:0000255" key="3">
    <source>
        <dbReference type="PROSITE-ProRule" id="PRU01096"/>
    </source>
</evidence>
<evidence type="ECO:0000269" key="4">
    <source>
    </source>
</evidence>
<evidence type="ECO:0000269" key="5">
    <source>
    </source>
</evidence>
<evidence type="ECO:0000303" key="6">
    <source>
    </source>
</evidence>
<evidence type="ECO:0000305" key="7"/>
<evidence type="ECO:0000305" key="8">
    <source>
    </source>
</evidence>
<protein>
    <recommendedName>
        <fullName evidence="6">Endo-1,4-beta-xylanase A</fullName>
        <ecNumber evidence="4">3.2.1.8</ecNumber>
    </recommendedName>
    <alternativeName>
        <fullName evidence="7">1,4-beta-D-xylan xylanohydrolase A</fullName>
    </alternativeName>
</protein>
<keyword id="KW-0119">Carbohydrate metabolism</keyword>
<keyword id="KW-0325">Glycoprotein</keyword>
<keyword id="KW-0326">Glycosidase</keyword>
<keyword id="KW-0378">Hydrolase</keyword>
<keyword id="KW-0624">Polysaccharide degradation</keyword>
<keyword id="KW-0964">Secreted</keyword>
<keyword id="KW-0732">Signal</keyword>
<keyword id="KW-0858">Xylan degradation</keyword>
<gene>
    <name evidence="6" type="primary">XynA</name>
</gene>
<organism>
    <name type="scientific">Humicola insolens</name>
    <name type="common">Soft-rot fungus</name>
    <dbReference type="NCBI Taxonomy" id="85995"/>
    <lineage>
        <taxon>Eukaryota</taxon>
        <taxon>Fungi</taxon>
        <taxon>Dikarya</taxon>
        <taxon>Ascomycota</taxon>
        <taxon>Pezizomycotina</taxon>
        <taxon>Sordariomycetes</taxon>
        <taxon>Sordariomycetidae</taxon>
        <taxon>Sordariales</taxon>
        <taxon>Chaetomiaceae</taxon>
        <taxon>Mycothermus</taxon>
    </lineage>
</organism>
<accession>M4MGK7</accession>